<protein>
    <recommendedName>
        <fullName evidence="6">Hydrogenase/urease maturation factor HypA</fullName>
    </recommendedName>
</protein>
<evidence type="ECO:0000255" key="1">
    <source>
        <dbReference type="HAMAP-Rule" id="MF_00213"/>
    </source>
</evidence>
<evidence type="ECO:0000269" key="2">
    <source>
    </source>
</evidence>
<evidence type="ECO:0000269" key="3">
    <source>
    </source>
</evidence>
<evidence type="ECO:0000269" key="4">
    <source>
    </source>
</evidence>
<evidence type="ECO:0000303" key="5">
    <source>
    </source>
</evidence>
<evidence type="ECO:0000305" key="6"/>
<evidence type="ECO:0000305" key="7">
    <source>
    </source>
</evidence>
<evidence type="ECO:0000305" key="8">
    <source>
    </source>
</evidence>
<evidence type="ECO:0007744" key="9">
    <source>
        <dbReference type="PDB" id="2KDX"/>
    </source>
</evidence>
<evidence type="ECO:0007829" key="10">
    <source>
        <dbReference type="PDB" id="2KDX"/>
    </source>
</evidence>
<comment type="function">
    <text evidence="2 3">Involved in the maturation of [NiFe] hydrogenases. Required for nickel insertion into the metal center of the hydrogenase. Is also required for urease maturation.</text>
</comment>
<comment type="subunit">
    <text evidence="3">Monomer and homodimer. Forms a complex with HypB.</text>
</comment>
<comment type="disruption phenotype">
    <text evidence="2">Mutant has negligible hydrogenase activity and is severely impaired in urease activity.</text>
</comment>
<comment type="similarity">
    <text evidence="1 6">Belongs to the HypA/HybF family.</text>
</comment>
<dbReference type="EMBL" id="AE000511">
    <property type="protein sequence ID" value="AAD07910.1"/>
    <property type="molecule type" value="Genomic_DNA"/>
</dbReference>
<dbReference type="PIR" id="E64628">
    <property type="entry name" value="E64628"/>
</dbReference>
<dbReference type="RefSeq" id="NP_207663.1">
    <property type="nucleotide sequence ID" value="NC_000915.1"/>
</dbReference>
<dbReference type="RefSeq" id="WP_000545280.1">
    <property type="nucleotide sequence ID" value="NC_018939.1"/>
</dbReference>
<dbReference type="PDB" id="2KDX">
    <property type="method" value="NMR"/>
    <property type="chains" value="A=1-117"/>
</dbReference>
<dbReference type="PDBsum" id="2KDX"/>
<dbReference type="BMRB" id="P0A0U4"/>
<dbReference type="SMR" id="P0A0U4"/>
<dbReference type="IntAct" id="P0A0U4">
    <property type="interactions" value="19"/>
</dbReference>
<dbReference type="MINT" id="P0A0U4"/>
<dbReference type="STRING" id="85962.HP_0869"/>
<dbReference type="PaxDb" id="85962-C694_04450"/>
<dbReference type="DNASU" id="899398"/>
<dbReference type="EnsemblBacteria" id="AAD07910">
    <property type="protein sequence ID" value="AAD07910"/>
    <property type="gene ID" value="HP_0869"/>
</dbReference>
<dbReference type="KEGG" id="heo:C694_04450"/>
<dbReference type="KEGG" id="hpy:HP_0869"/>
<dbReference type="PATRIC" id="fig|85962.47.peg.923"/>
<dbReference type="eggNOG" id="COG0375">
    <property type="taxonomic scope" value="Bacteria"/>
</dbReference>
<dbReference type="InParanoid" id="P0A0U4"/>
<dbReference type="OrthoDB" id="9800361at2"/>
<dbReference type="PhylomeDB" id="P0A0U4"/>
<dbReference type="BioCyc" id="MetaCyc:HP_RS04240-MONOMER"/>
<dbReference type="EvolutionaryTrace" id="P0A0U4"/>
<dbReference type="Proteomes" id="UP000000429">
    <property type="component" value="Chromosome"/>
</dbReference>
<dbReference type="GO" id="GO:0016151">
    <property type="term" value="F:nickel cation binding"/>
    <property type="evidence" value="ECO:0000318"/>
    <property type="project" value="GO_Central"/>
</dbReference>
<dbReference type="GO" id="GO:0008270">
    <property type="term" value="F:zinc ion binding"/>
    <property type="evidence" value="ECO:0000318"/>
    <property type="project" value="GO_Central"/>
</dbReference>
<dbReference type="GO" id="GO:0051604">
    <property type="term" value="P:protein maturation"/>
    <property type="evidence" value="ECO:0000318"/>
    <property type="project" value="GO_Central"/>
</dbReference>
<dbReference type="GO" id="GO:0036211">
    <property type="term" value="P:protein modification process"/>
    <property type="evidence" value="ECO:0007669"/>
    <property type="project" value="UniProtKB-UniRule"/>
</dbReference>
<dbReference type="Gene3D" id="3.30.2320.80">
    <property type="match status" value="1"/>
</dbReference>
<dbReference type="HAMAP" id="MF_00213">
    <property type="entry name" value="HypA_HybF"/>
    <property type="match status" value="1"/>
</dbReference>
<dbReference type="InterPro" id="IPR020538">
    <property type="entry name" value="Hydgase_Ni_incorp_HypA/HybF_CS"/>
</dbReference>
<dbReference type="InterPro" id="IPR000688">
    <property type="entry name" value="HypA/HybF"/>
</dbReference>
<dbReference type="NCBIfam" id="TIGR00100">
    <property type="entry name" value="hypA"/>
    <property type="match status" value="1"/>
</dbReference>
<dbReference type="NCBIfam" id="NF001839">
    <property type="entry name" value="PRK00564.1"/>
    <property type="match status" value="1"/>
</dbReference>
<dbReference type="PANTHER" id="PTHR34535">
    <property type="entry name" value="HYDROGENASE MATURATION FACTOR HYPA"/>
    <property type="match status" value="1"/>
</dbReference>
<dbReference type="PANTHER" id="PTHR34535:SF3">
    <property type="entry name" value="HYDROGENASE MATURATION FACTOR HYPA"/>
    <property type="match status" value="1"/>
</dbReference>
<dbReference type="Pfam" id="PF01155">
    <property type="entry name" value="HypA"/>
    <property type="match status" value="1"/>
</dbReference>
<dbReference type="PIRSF" id="PIRSF004761">
    <property type="entry name" value="Hydrgn_mat_HypA"/>
    <property type="match status" value="1"/>
</dbReference>
<dbReference type="PROSITE" id="PS01249">
    <property type="entry name" value="HYPA"/>
    <property type="match status" value="1"/>
</dbReference>
<organism>
    <name type="scientific">Helicobacter pylori (strain ATCC 700392 / 26695)</name>
    <name type="common">Campylobacter pylori</name>
    <dbReference type="NCBI Taxonomy" id="85962"/>
    <lineage>
        <taxon>Bacteria</taxon>
        <taxon>Pseudomonadati</taxon>
        <taxon>Campylobacterota</taxon>
        <taxon>Epsilonproteobacteria</taxon>
        <taxon>Campylobacterales</taxon>
        <taxon>Helicobacteraceae</taxon>
        <taxon>Helicobacter</taxon>
    </lineage>
</organism>
<keyword id="KW-0002">3D-structure</keyword>
<keyword id="KW-0479">Metal-binding</keyword>
<keyword id="KW-0533">Nickel</keyword>
<keyword id="KW-1185">Reference proteome</keyword>
<keyword id="KW-0862">Zinc</keyword>
<gene>
    <name evidence="5" type="primary">hypA</name>
    <name type="ordered locus">HP_0869</name>
</gene>
<proteinExistence type="evidence at protein level"/>
<name>HYPA_HELPY</name>
<feature type="chain" id="PRO_0000129042" description="Hydrogenase/urease maturation factor HypA">
    <location>
        <begin position="1"/>
        <end position="117"/>
    </location>
</feature>
<feature type="binding site" evidence="1 7 8">
    <location>
        <position position="2"/>
    </location>
    <ligand>
        <name>Ni(2+)</name>
        <dbReference type="ChEBI" id="CHEBI:49786"/>
    </ligand>
</feature>
<feature type="binding site" evidence="8">
    <location>
        <position position="3"/>
    </location>
    <ligand>
        <name>Ni(2+)</name>
        <dbReference type="ChEBI" id="CHEBI:49786"/>
    </ligand>
</feature>
<feature type="binding site" evidence="8">
    <location>
        <position position="40"/>
    </location>
    <ligand>
        <name>Ni(2+)</name>
        <dbReference type="ChEBI" id="CHEBI:49786"/>
    </ligand>
</feature>
<feature type="binding site" evidence="1 4 9">
    <location>
        <position position="74"/>
    </location>
    <ligand>
        <name>Zn(2+)</name>
        <dbReference type="ChEBI" id="CHEBI:29105"/>
    </ligand>
</feature>
<feature type="binding site" evidence="1 4 9">
    <location>
        <position position="77"/>
    </location>
    <ligand>
        <name>Zn(2+)</name>
        <dbReference type="ChEBI" id="CHEBI:29105"/>
    </ligand>
</feature>
<feature type="binding site" evidence="1 4 9">
    <location>
        <position position="91"/>
    </location>
    <ligand>
        <name>Zn(2+)</name>
        <dbReference type="ChEBI" id="CHEBI:29105"/>
    </ligand>
</feature>
<feature type="binding site" evidence="1 4 9">
    <location>
        <position position="94"/>
    </location>
    <ligand>
        <name>Zn(2+)</name>
        <dbReference type="ChEBI" id="CHEBI:29105"/>
    </ligand>
</feature>
<feature type="mutagenesis site" description="Cannot bind nickel. Lacks hydrogenase activity and has only 2% of the urease activity." evidence="3">
    <original>H</original>
    <variation>A</variation>
    <location>
        <position position="2"/>
    </location>
</feature>
<feature type="mutagenesis site" description="Does not affect nickel-binding ability." evidence="3">
    <original>H</original>
    <variation>A</variation>
    <location>
        <position position="17"/>
    </location>
</feature>
<feature type="mutagenesis site" description="Does not affect nickel-binding ability." evidence="3">
    <original>H</original>
    <variation>A</variation>
    <location>
        <position position="24"/>
    </location>
</feature>
<feature type="mutagenesis site" description="Does not affect nickel-binding ability." evidence="3">
    <original>H</original>
    <variation>A</variation>
    <location>
        <position position="79"/>
    </location>
</feature>
<feature type="mutagenesis site" description="Does not affect nickel-binding ability." evidence="3">
    <original>H</original>
    <variation>A</variation>
    <location>
        <position position="95"/>
    </location>
</feature>
<feature type="helix" evidence="10">
    <location>
        <begin position="2"/>
        <end position="20"/>
    </location>
</feature>
<feature type="strand" evidence="10">
    <location>
        <begin position="28"/>
        <end position="34"/>
    </location>
</feature>
<feature type="helix" evidence="10">
    <location>
        <begin position="41"/>
        <end position="51"/>
    </location>
</feature>
<feature type="helix" evidence="10">
    <location>
        <begin position="52"/>
        <end position="54"/>
    </location>
</feature>
<feature type="turn" evidence="10">
    <location>
        <begin position="56"/>
        <end position="58"/>
    </location>
</feature>
<feature type="strand" evidence="10">
    <location>
        <begin position="63"/>
        <end position="68"/>
    </location>
</feature>
<feature type="strand" evidence="10">
    <location>
        <begin position="71"/>
        <end position="73"/>
    </location>
</feature>
<feature type="strand" evidence="10">
    <location>
        <begin position="75"/>
        <end position="78"/>
    </location>
</feature>
<feature type="strand" evidence="10">
    <location>
        <begin position="92"/>
        <end position="96"/>
    </location>
</feature>
<feature type="strand" evidence="10">
    <location>
        <begin position="100"/>
        <end position="105"/>
    </location>
</feature>
<feature type="strand" evidence="10">
    <location>
        <begin position="108"/>
        <end position="113"/>
    </location>
</feature>
<sequence length="117" mass="13202">MHEYSVVSSLIALCEEHAKKNQAHKIERVVVGIGERSAMDKSLFVSAFETFREESLVCKDAILDIVDEKVELECKDCSHVFKPNALDYGVCEKCHSKNVIITQGNEMRLLSLEMLAE</sequence>
<reference key="1">
    <citation type="journal article" date="1997" name="Nature">
        <title>The complete genome sequence of the gastric pathogen Helicobacter pylori.</title>
        <authorList>
            <person name="Tomb J.-F."/>
            <person name="White O."/>
            <person name="Kerlavage A.R."/>
            <person name="Clayton R.A."/>
            <person name="Sutton G.G."/>
            <person name="Fleischmann R.D."/>
            <person name="Ketchum K.A."/>
            <person name="Klenk H.-P."/>
            <person name="Gill S.R."/>
            <person name="Dougherty B.A."/>
            <person name="Nelson K.E."/>
            <person name="Quackenbush J."/>
            <person name="Zhou L."/>
            <person name="Kirkness E.F."/>
            <person name="Peterson S.N."/>
            <person name="Loftus B.J."/>
            <person name="Richardson D.L."/>
            <person name="Dodson R.J."/>
            <person name="Khalak H.G."/>
            <person name="Glodek A."/>
            <person name="McKenney K."/>
            <person name="FitzGerald L.M."/>
            <person name="Lee N."/>
            <person name="Adams M.D."/>
            <person name="Hickey E.K."/>
            <person name="Berg D.E."/>
            <person name="Gocayne J.D."/>
            <person name="Utterback T.R."/>
            <person name="Peterson J.D."/>
            <person name="Kelley J.M."/>
            <person name="Cotton M.D."/>
            <person name="Weidman J.F."/>
            <person name="Fujii C."/>
            <person name="Bowman C."/>
            <person name="Watthey L."/>
            <person name="Wallin E."/>
            <person name="Hayes W.S."/>
            <person name="Borodovsky M."/>
            <person name="Karp P.D."/>
            <person name="Smith H.O."/>
            <person name="Fraser C.M."/>
            <person name="Venter J.C."/>
        </authorList>
    </citation>
    <scope>NUCLEOTIDE SEQUENCE [LARGE SCALE GENOMIC DNA]</scope>
    <source>
        <strain>ATCC 700392 / 26695</strain>
    </source>
</reference>
<reference key="2">
    <citation type="journal article" date="2001" name="Mol. Microbiol.">
        <title>Requirement of nickel metabolism proteins HypA and HypB for full activity of both hydrogenase and urease in Helicobacter pylori.</title>
        <authorList>
            <person name="Olson J.W."/>
            <person name="Mehta N.S."/>
            <person name="Maier R.J."/>
        </authorList>
    </citation>
    <scope>FUNCTION</scope>
    <scope>DISRUPTION PHENOTYPE</scope>
    <source>
        <strain>ATCC 43504</strain>
    </source>
</reference>
<reference key="3">
    <citation type="journal article" date="2003" name="J. Bacteriol.">
        <title>Characterization of Helicobacter pylori nickel metabolism accessory proteins needed for maturation of both urease and hydrogenase.</title>
        <authorList>
            <person name="Mehta N."/>
            <person name="Olson J.W."/>
            <person name="Maier R.J."/>
        </authorList>
    </citation>
    <scope>FUNCTION</scope>
    <scope>SUBUNIT</scope>
    <scope>INTERACTION WITH HYPB</scope>
    <scope>NICKEL-BINDING</scope>
    <scope>MUTAGENESIS OF HIS-2; HIS-17; HIS-24; HIS-79 AND HIS-95</scope>
    <source>
        <strain>ATCC 43504</strain>
    </source>
</reference>
<reference evidence="9" key="4">
    <citation type="journal article" date="2009" name="J. Am. Chem. Soc.">
        <title>Structure of a nickel chaperone, HypA, from Helicobacter pylori reveals two distinct metal binding sites.</title>
        <authorList>
            <person name="Xia W."/>
            <person name="Li H."/>
            <person name="Sze K.H."/>
            <person name="Sun H."/>
        </authorList>
    </citation>
    <scope>STRUCTURE BY NMR IN COMPLEX WITH ZINC</scope>
    <scope>NICKEL-BINDING</scope>
</reference>
<accession>P0A0U4</accession>
<accession>O25539</accession>